<sequence>MNQFIPRGTSKISARGLNVHYGEKQALHDIDLDIPAGEVTALIGPSGCGKSTFLRCINRMNDMVDGAKVTGSLTLDGSDVYDRSLDVVQLRARVGMVFQKPNPFPKSIYDNVAYGPRIHGLARDQAELDEIVMNSLEKAGLLAEVESRLSESGTGLSGGQQQRLCIARAIAVAPEVILMDEPCSALDPIATAKVEELIDELRDNYTIVIVTHSMQQAARVSQRTAFFHLGKLIEVGGTEEIFTNPKEPLTQGYITGRFG</sequence>
<organism>
    <name type="scientific">Paramagnetospirillum magneticum (strain ATCC 700264 / AMB-1)</name>
    <name type="common">Magnetospirillum magneticum</name>
    <dbReference type="NCBI Taxonomy" id="342108"/>
    <lineage>
        <taxon>Bacteria</taxon>
        <taxon>Pseudomonadati</taxon>
        <taxon>Pseudomonadota</taxon>
        <taxon>Alphaproteobacteria</taxon>
        <taxon>Rhodospirillales</taxon>
        <taxon>Magnetospirillaceae</taxon>
        <taxon>Paramagnetospirillum</taxon>
    </lineage>
</organism>
<reference key="1">
    <citation type="journal article" date="2005" name="DNA Res.">
        <title>Complete genome sequence of the facultative anaerobic magnetotactic bacterium Magnetospirillum sp. strain AMB-1.</title>
        <authorList>
            <person name="Matsunaga T."/>
            <person name="Okamura Y."/>
            <person name="Fukuda Y."/>
            <person name="Wahyudi A.T."/>
            <person name="Murase Y."/>
            <person name="Takeyama H."/>
        </authorList>
    </citation>
    <scope>NUCLEOTIDE SEQUENCE [LARGE SCALE GENOMIC DNA]</scope>
    <source>
        <strain>ATCC 700264 / AMB-1</strain>
    </source>
</reference>
<accession>Q2W7J9</accession>
<gene>
    <name evidence="1" type="primary">pstB2</name>
    <name type="ordered locus">amb1372</name>
</gene>
<keyword id="KW-0067">ATP-binding</keyword>
<keyword id="KW-0997">Cell inner membrane</keyword>
<keyword id="KW-1003">Cell membrane</keyword>
<keyword id="KW-0472">Membrane</keyword>
<keyword id="KW-0547">Nucleotide-binding</keyword>
<keyword id="KW-0592">Phosphate transport</keyword>
<keyword id="KW-1278">Translocase</keyword>
<keyword id="KW-0813">Transport</keyword>
<evidence type="ECO:0000255" key="1">
    <source>
        <dbReference type="HAMAP-Rule" id="MF_01702"/>
    </source>
</evidence>
<protein>
    <recommendedName>
        <fullName evidence="1">Phosphate import ATP-binding protein PstB 2</fullName>
        <ecNumber evidence="1">7.3.2.1</ecNumber>
    </recommendedName>
    <alternativeName>
        <fullName evidence="1">ABC phosphate transporter 2</fullName>
    </alternativeName>
    <alternativeName>
        <fullName evidence="1">Phosphate-transporting ATPase 2</fullName>
    </alternativeName>
</protein>
<dbReference type="EC" id="7.3.2.1" evidence="1"/>
<dbReference type="EMBL" id="AP007255">
    <property type="protein sequence ID" value="BAE50176.1"/>
    <property type="molecule type" value="Genomic_DNA"/>
</dbReference>
<dbReference type="RefSeq" id="WP_011383782.1">
    <property type="nucleotide sequence ID" value="NC_007626.1"/>
</dbReference>
<dbReference type="SMR" id="Q2W7J9"/>
<dbReference type="STRING" id="342108.amb1372"/>
<dbReference type="KEGG" id="mag:amb1372"/>
<dbReference type="HOGENOM" id="CLU_000604_1_22_5"/>
<dbReference type="OrthoDB" id="9802264at2"/>
<dbReference type="Proteomes" id="UP000007058">
    <property type="component" value="Chromosome"/>
</dbReference>
<dbReference type="GO" id="GO:0005886">
    <property type="term" value="C:plasma membrane"/>
    <property type="evidence" value="ECO:0007669"/>
    <property type="project" value="UniProtKB-SubCell"/>
</dbReference>
<dbReference type="GO" id="GO:0005524">
    <property type="term" value="F:ATP binding"/>
    <property type="evidence" value="ECO:0007669"/>
    <property type="project" value="UniProtKB-KW"/>
</dbReference>
<dbReference type="GO" id="GO:0016887">
    <property type="term" value="F:ATP hydrolysis activity"/>
    <property type="evidence" value="ECO:0007669"/>
    <property type="project" value="InterPro"/>
</dbReference>
<dbReference type="GO" id="GO:0015415">
    <property type="term" value="F:ATPase-coupled phosphate ion transmembrane transporter activity"/>
    <property type="evidence" value="ECO:0007669"/>
    <property type="project" value="UniProtKB-EC"/>
</dbReference>
<dbReference type="GO" id="GO:0035435">
    <property type="term" value="P:phosphate ion transmembrane transport"/>
    <property type="evidence" value="ECO:0007669"/>
    <property type="project" value="InterPro"/>
</dbReference>
<dbReference type="CDD" id="cd03260">
    <property type="entry name" value="ABC_PstB_phosphate_transporter"/>
    <property type="match status" value="1"/>
</dbReference>
<dbReference type="Gene3D" id="3.40.50.300">
    <property type="entry name" value="P-loop containing nucleotide triphosphate hydrolases"/>
    <property type="match status" value="1"/>
</dbReference>
<dbReference type="InterPro" id="IPR003593">
    <property type="entry name" value="AAA+_ATPase"/>
</dbReference>
<dbReference type="InterPro" id="IPR003439">
    <property type="entry name" value="ABC_transporter-like_ATP-bd"/>
</dbReference>
<dbReference type="InterPro" id="IPR017871">
    <property type="entry name" value="ABC_transporter-like_CS"/>
</dbReference>
<dbReference type="InterPro" id="IPR027417">
    <property type="entry name" value="P-loop_NTPase"/>
</dbReference>
<dbReference type="InterPro" id="IPR005670">
    <property type="entry name" value="PstB-like"/>
</dbReference>
<dbReference type="NCBIfam" id="TIGR00972">
    <property type="entry name" value="3a0107s01c2"/>
    <property type="match status" value="1"/>
</dbReference>
<dbReference type="PANTHER" id="PTHR43423">
    <property type="entry name" value="ABC TRANSPORTER I FAMILY MEMBER 17"/>
    <property type="match status" value="1"/>
</dbReference>
<dbReference type="PANTHER" id="PTHR43423:SF1">
    <property type="entry name" value="ABC TRANSPORTER I FAMILY MEMBER 17"/>
    <property type="match status" value="1"/>
</dbReference>
<dbReference type="Pfam" id="PF00005">
    <property type="entry name" value="ABC_tran"/>
    <property type="match status" value="1"/>
</dbReference>
<dbReference type="SMART" id="SM00382">
    <property type="entry name" value="AAA"/>
    <property type="match status" value="1"/>
</dbReference>
<dbReference type="SUPFAM" id="SSF52540">
    <property type="entry name" value="P-loop containing nucleoside triphosphate hydrolases"/>
    <property type="match status" value="1"/>
</dbReference>
<dbReference type="PROSITE" id="PS00211">
    <property type="entry name" value="ABC_TRANSPORTER_1"/>
    <property type="match status" value="1"/>
</dbReference>
<dbReference type="PROSITE" id="PS50893">
    <property type="entry name" value="ABC_TRANSPORTER_2"/>
    <property type="match status" value="1"/>
</dbReference>
<dbReference type="PROSITE" id="PS51238">
    <property type="entry name" value="PSTB"/>
    <property type="match status" value="1"/>
</dbReference>
<comment type="function">
    <text evidence="1">Part of the ABC transporter complex PstSACB involved in phosphate import. Responsible for energy coupling to the transport system.</text>
</comment>
<comment type="catalytic activity">
    <reaction evidence="1">
        <text>phosphate(out) + ATP + H2O = ADP + 2 phosphate(in) + H(+)</text>
        <dbReference type="Rhea" id="RHEA:24440"/>
        <dbReference type="ChEBI" id="CHEBI:15377"/>
        <dbReference type="ChEBI" id="CHEBI:15378"/>
        <dbReference type="ChEBI" id="CHEBI:30616"/>
        <dbReference type="ChEBI" id="CHEBI:43474"/>
        <dbReference type="ChEBI" id="CHEBI:456216"/>
        <dbReference type="EC" id="7.3.2.1"/>
    </reaction>
</comment>
<comment type="subunit">
    <text evidence="1">The complex is composed of two ATP-binding proteins (PstB), two transmembrane proteins (PstC and PstA) and a solute-binding protein (PstS).</text>
</comment>
<comment type="subcellular location">
    <subcellularLocation>
        <location evidence="1">Cell inner membrane</location>
        <topology evidence="1">Peripheral membrane protein</topology>
    </subcellularLocation>
</comment>
<comment type="similarity">
    <text evidence="1">Belongs to the ABC transporter superfamily. Phosphate importer (TC 3.A.1.7) family.</text>
</comment>
<proteinExistence type="inferred from homology"/>
<feature type="chain" id="PRO_0000272473" description="Phosphate import ATP-binding protein PstB 2">
    <location>
        <begin position="1"/>
        <end position="259"/>
    </location>
</feature>
<feature type="domain" description="ABC transporter" evidence="1">
    <location>
        <begin position="12"/>
        <end position="254"/>
    </location>
</feature>
<feature type="binding site" evidence="1">
    <location>
        <begin position="44"/>
        <end position="51"/>
    </location>
    <ligand>
        <name>ATP</name>
        <dbReference type="ChEBI" id="CHEBI:30616"/>
    </ligand>
</feature>
<name>PSTB2_PARM1</name>